<evidence type="ECO:0000269" key="1">
    <source>
    </source>
</evidence>
<evidence type="ECO:0000305" key="2"/>
<evidence type="ECO:0007829" key="3">
    <source>
        <dbReference type="PDB" id="6PRK"/>
    </source>
</evidence>
<gene>
    <name type="primary">ylbF</name>
    <name type="ordered locus">BSU14990</name>
</gene>
<keyword id="KW-0002">3D-structure</keyword>
<keyword id="KW-0178">Competence</keyword>
<keyword id="KW-0963">Cytoplasm</keyword>
<keyword id="KW-1185">Reference proteome</keyword>
<keyword id="KW-0749">Sporulation</keyword>
<sequence>MYATMESVRLQSEAQQLAEMILQSETAENYRNCYKRLQEDEEAGRIIRSFIKIKEQYEDVQRFGKYHPDYREISRKMREIKRELDLNDKVADFKRAENELQSILDEVSVEIGTAVSEHVKVPTGNPYFDGLSSCGGGCGSGGSCGCKVS</sequence>
<reference key="1">
    <citation type="submission" date="1997-08" db="EMBL/GenBank/DDBJ databases">
        <title>Bacillus subtilis chromosomal region downstream nprE.</title>
        <authorList>
            <person name="Bertero M."/>
            <person name="Presecan E."/>
            <person name="Glaser P."/>
            <person name="Richou A."/>
            <person name="Danchin A."/>
        </authorList>
    </citation>
    <scope>NUCLEOTIDE SEQUENCE [GENOMIC DNA]</scope>
    <source>
        <strain>168</strain>
    </source>
</reference>
<reference key="2">
    <citation type="journal article" date="1997" name="Nature">
        <title>The complete genome sequence of the Gram-positive bacterium Bacillus subtilis.</title>
        <authorList>
            <person name="Kunst F."/>
            <person name="Ogasawara N."/>
            <person name="Moszer I."/>
            <person name="Albertini A.M."/>
            <person name="Alloni G."/>
            <person name="Azevedo V."/>
            <person name="Bertero M.G."/>
            <person name="Bessieres P."/>
            <person name="Bolotin A."/>
            <person name="Borchert S."/>
            <person name="Borriss R."/>
            <person name="Boursier L."/>
            <person name="Brans A."/>
            <person name="Braun M."/>
            <person name="Brignell S.C."/>
            <person name="Bron S."/>
            <person name="Brouillet S."/>
            <person name="Bruschi C.V."/>
            <person name="Caldwell B."/>
            <person name="Capuano V."/>
            <person name="Carter N.M."/>
            <person name="Choi S.-K."/>
            <person name="Codani J.-J."/>
            <person name="Connerton I.F."/>
            <person name="Cummings N.J."/>
            <person name="Daniel R.A."/>
            <person name="Denizot F."/>
            <person name="Devine K.M."/>
            <person name="Duesterhoeft A."/>
            <person name="Ehrlich S.D."/>
            <person name="Emmerson P.T."/>
            <person name="Entian K.-D."/>
            <person name="Errington J."/>
            <person name="Fabret C."/>
            <person name="Ferrari E."/>
            <person name="Foulger D."/>
            <person name="Fritz C."/>
            <person name="Fujita M."/>
            <person name="Fujita Y."/>
            <person name="Fuma S."/>
            <person name="Galizzi A."/>
            <person name="Galleron N."/>
            <person name="Ghim S.-Y."/>
            <person name="Glaser P."/>
            <person name="Goffeau A."/>
            <person name="Golightly E.J."/>
            <person name="Grandi G."/>
            <person name="Guiseppi G."/>
            <person name="Guy B.J."/>
            <person name="Haga K."/>
            <person name="Haiech J."/>
            <person name="Harwood C.R."/>
            <person name="Henaut A."/>
            <person name="Hilbert H."/>
            <person name="Holsappel S."/>
            <person name="Hosono S."/>
            <person name="Hullo M.-F."/>
            <person name="Itaya M."/>
            <person name="Jones L.-M."/>
            <person name="Joris B."/>
            <person name="Karamata D."/>
            <person name="Kasahara Y."/>
            <person name="Klaerr-Blanchard M."/>
            <person name="Klein C."/>
            <person name="Kobayashi Y."/>
            <person name="Koetter P."/>
            <person name="Koningstein G."/>
            <person name="Krogh S."/>
            <person name="Kumano M."/>
            <person name="Kurita K."/>
            <person name="Lapidus A."/>
            <person name="Lardinois S."/>
            <person name="Lauber J."/>
            <person name="Lazarevic V."/>
            <person name="Lee S.-M."/>
            <person name="Levine A."/>
            <person name="Liu H."/>
            <person name="Masuda S."/>
            <person name="Mauel C."/>
            <person name="Medigue C."/>
            <person name="Medina N."/>
            <person name="Mellado R.P."/>
            <person name="Mizuno M."/>
            <person name="Moestl D."/>
            <person name="Nakai S."/>
            <person name="Noback M."/>
            <person name="Noone D."/>
            <person name="O'Reilly M."/>
            <person name="Ogawa K."/>
            <person name="Ogiwara A."/>
            <person name="Oudega B."/>
            <person name="Park S.-H."/>
            <person name="Parro V."/>
            <person name="Pohl T.M."/>
            <person name="Portetelle D."/>
            <person name="Porwollik S."/>
            <person name="Prescott A.M."/>
            <person name="Presecan E."/>
            <person name="Pujic P."/>
            <person name="Purnelle B."/>
            <person name="Rapoport G."/>
            <person name="Rey M."/>
            <person name="Reynolds S."/>
            <person name="Rieger M."/>
            <person name="Rivolta C."/>
            <person name="Rocha E."/>
            <person name="Roche B."/>
            <person name="Rose M."/>
            <person name="Sadaie Y."/>
            <person name="Sato T."/>
            <person name="Scanlan E."/>
            <person name="Schleich S."/>
            <person name="Schroeter R."/>
            <person name="Scoffone F."/>
            <person name="Sekiguchi J."/>
            <person name="Sekowska A."/>
            <person name="Seror S.J."/>
            <person name="Serror P."/>
            <person name="Shin B.-S."/>
            <person name="Soldo B."/>
            <person name="Sorokin A."/>
            <person name="Tacconi E."/>
            <person name="Takagi T."/>
            <person name="Takahashi H."/>
            <person name="Takemaru K."/>
            <person name="Takeuchi M."/>
            <person name="Tamakoshi A."/>
            <person name="Tanaka T."/>
            <person name="Terpstra P."/>
            <person name="Tognoni A."/>
            <person name="Tosato V."/>
            <person name="Uchiyama S."/>
            <person name="Vandenbol M."/>
            <person name="Vannier F."/>
            <person name="Vassarotti A."/>
            <person name="Viari A."/>
            <person name="Wambutt R."/>
            <person name="Wedler E."/>
            <person name="Wedler H."/>
            <person name="Weitzenegger T."/>
            <person name="Winters P."/>
            <person name="Wipat A."/>
            <person name="Yamamoto H."/>
            <person name="Yamane K."/>
            <person name="Yasumoto K."/>
            <person name="Yata K."/>
            <person name="Yoshida K."/>
            <person name="Yoshikawa H.-F."/>
            <person name="Zumstein E."/>
            <person name="Yoshikawa H."/>
            <person name="Danchin A."/>
        </authorList>
    </citation>
    <scope>NUCLEOTIDE SEQUENCE [LARGE SCALE GENOMIC DNA]</scope>
    <source>
        <strain>168</strain>
    </source>
</reference>
<reference key="3">
    <citation type="journal article" date="2000" name="Mol. Microbiol.">
        <title>Characterization of ylbF, a new gene involved in competence development and sporulation in Bacillus subtilis.</title>
        <authorList>
            <person name="Tortosa P."/>
            <person name="Albano M."/>
            <person name="Dubnau D."/>
        </authorList>
    </citation>
    <scope>INVOLVEMENT IN COMPETENCE</scope>
    <scope>INVOLVEMENT IN SPORULATION</scope>
    <source>
        <strain>168</strain>
    </source>
</reference>
<reference key="4">
    <citation type="journal article" date="2004" name="J. Bacteriol.">
        <title>Genes involved in formation of structured multicellular communities by Bacillus subtilis.</title>
        <authorList>
            <person name="Branda S.S."/>
            <person name="Gonzalez-Pastor J.E."/>
            <person name="Dervyn E."/>
            <person name="Ehrlich S.D."/>
            <person name="Losick R."/>
            <person name="Kolter R."/>
        </authorList>
    </citation>
    <scope>ROLE IN FORMATION OF BIOFILMS</scope>
    <source>
        <strain>168</strain>
        <strain>3610</strain>
    </source>
</reference>
<proteinExistence type="evidence at protein level"/>
<organism>
    <name type="scientific">Bacillus subtilis (strain 168)</name>
    <dbReference type="NCBI Taxonomy" id="224308"/>
    <lineage>
        <taxon>Bacteria</taxon>
        <taxon>Bacillati</taxon>
        <taxon>Bacillota</taxon>
        <taxon>Bacilli</taxon>
        <taxon>Bacillales</taxon>
        <taxon>Bacillaceae</taxon>
        <taxon>Bacillus</taxon>
    </lineage>
</organism>
<name>YLBF_BACSU</name>
<accession>O34412</accession>
<comment type="function">
    <text evidence="1">Regulates sporulation prior to stage II. Positively controls the competence regulator ComK at a post-transcriptional level. May modulate the translation, stability or activity of ComS. May work together with YmcA to regulate community development.</text>
</comment>
<comment type="subcellular location">
    <subcellularLocation>
        <location evidence="2">Cytoplasm</location>
    </subcellularLocation>
</comment>
<protein>
    <recommendedName>
        <fullName>Regulatory protein YlbF</fullName>
    </recommendedName>
</protein>
<dbReference type="EMBL" id="Z98682">
    <property type="protein sequence ID" value="CAB11352.1"/>
    <property type="molecule type" value="Genomic_DNA"/>
</dbReference>
<dbReference type="EMBL" id="AL009126">
    <property type="protein sequence ID" value="CAB13372.1"/>
    <property type="molecule type" value="Genomic_DNA"/>
</dbReference>
<dbReference type="PIR" id="C69874">
    <property type="entry name" value="C69874"/>
</dbReference>
<dbReference type="PDB" id="6PRK">
    <property type="method" value="X-ray"/>
    <property type="resolution" value="3.20 A"/>
    <property type="chains" value="A=1-121"/>
</dbReference>
<dbReference type="PDBsum" id="6PRK"/>
<dbReference type="SMR" id="O34412"/>
<dbReference type="FunCoup" id="O34412">
    <property type="interactions" value="6"/>
</dbReference>
<dbReference type="STRING" id="224308.BSU14990"/>
<dbReference type="PaxDb" id="224308-BSU14990"/>
<dbReference type="EnsemblBacteria" id="CAB13372">
    <property type="protein sequence ID" value="CAB13372"/>
    <property type="gene ID" value="BSU_14990"/>
</dbReference>
<dbReference type="GeneID" id="939945"/>
<dbReference type="KEGG" id="bsu:BSU14990"/>
<dbReference type="PATRIC" id="fig|224308.179.peg.1634"/>
<dbReference type="eggNOG" id="COG3679">
    <property type="taxonomic scope" value="Bacteria"/>
</dbReference>
<dbReference type="InParanoid" id="O34412"/>
<dbReference type="OrthoDB" id="2157513at2"/>
<dbReference type="PhylomeDB" id="O34412"/>
<dbReference type="BioCyc" id="BSUB:BSU14990-MONOMER"/>
<dbReference type="PRO" id="PR:O34412"/>
<dbReference type="Proteomes" id="UP000001570">
    <property type="component" value="Chromosome"/>
</dbReference>
<dbReference type="GO" id="GO:0005737">
    <property type="term" value="C:cytoplasm"/>
    <property type="evidence" value="ECO:0007669"/>
    <property type="project" value="UniProtKB-SubCell"/>
</dbReference>
<dbReference type="GO" id="GO:0030420">
    <property type="term" value="P:establishment of competence for transformation"/>
    <property type="evidence" value="ECO:0007669"/>
    <property type="project" value="UniProtKB-KW"/>
</dbReference>
<dbReference type="GO" id="GO:0030435">
    <property type="term" value="P:sporulation resulting in formation of a cellular spore"/>
    <property type="evidence" value="ECO:0007669"/>
    <property type="project" value="UniProtKB-KW"/>
</dbReference>
<dbReference type="Gene3D" id="1.20.1500.10">
    <property type="entry name" value="YheA/YmcA-like"/>
    <property type="match status" value="1"/>
</dbReference>
<dbReference type="InterPro" id="IPR052767">
    <property type="entry name" value="Bact_com_dev_regulator"/>
</dbReference>
<dbReference type="InterPro" id="IPR010368">
    <property type="entry name" value="Com_YlbF"/>
</dbReference>
<dbReference type="InterPro" id="IPR023378">
    <property type="entry name" value="YheA/YmcA-like_dom_sf"/>
</dbReference>
<dbReference type="PANTHER" id="PTHR38448:SF2">
    <property type="entry name" value="REGULATORY PROTEIN YLBF"/>
    <property type="match status" value="1"/>
</dbReference>
<dbReference type="PANTHER" id="PTHR38448">
    <property type="entry name" value="REGULATORY PROTEIN YLBF-RELATED"/>
    <property type="match status" value="1"/>
</dbReference>
<dbReference type="Pfam" id="PF06133">
    <property type="entry name" value="Com_YlbF"/>
    <property type="match status" value="1"/>
</dbReference>
<dbReference type="SUPFAM" id="SSF158622">
    <property type="entry name" value="YheA/YmcA-like"/>
    <property type="match status" value="1"/>
</dbReference>
<feature type="chain" id="PRO_0000066288" description="Regulatory protein YlbF">
    <location>
        <begin position="1"/>
        <end position="149"/>
    </location>
</feature>
<feature type="helix" evidence="3">
    <location>
        <begin position="8"/>
        <end position="22"/>
    </location>
</feature>
<feature type="helix" evidence="3">
    <location>
        <begin position="25"/>
        <end position="39"/>
    </location>
</feature>
<feature type="helix" evidence="3">
    <location>
        <begin position="42"/>
        <end position="63"/>
    </location>
</feature>
<feature type="helix" evidence="3">
    <location>
        <begin position="70"/>
        <end position="86"/>
    </location>
</feature>
<feature type="helix" evidence="3">
    <location>
        <begin position="88"/>
        <end position="116"/>
    </location>
</feature>